<feature type="chain" id="PRO_0000335686" description="Putative uncharacterized protein FLJ45355">
    <location>
        <begin position="1"/>
        <end position="163"/>
    </location>
</feature>
<feature type="region of interest" description="Disordered" evidence="1">
    <location>
        <begin position="1"/>
        <end position="163"/>
    </location>
</feature>
<feature type="compositionally biased region" description="Basic and acidic residues" evidence="1">
    <location>
        <begin position="1"/>
        <end position="10"/>
    </location>
</feature>
<keyword id="KW-1185">Reference proteome</keyword>
<accession>Q6ZSN1</accession>
<proteinExistence type="evidence at transcript level"/>
<organism>
    <name type="scientific">Homo sapiens</name>
    <name type="common">Human</name>
    <dbReference type="NCBI Taxonomy" id="9606"/>
    <lineage>
        <taxon>Eukaryota</taxon>
        <taxon>Metazoa</taxon>
        <taxon>Chordata</taxon>
        <taxon>Craniata</taxon>
        <taxon>Vertebrata</taxon>
        <taxon>Euteleostomi</taxon>
        <taxon>Mammalia</taxon>
        <taxon>Eutheria</taxon>
        <taxon>Euarchontoglires</taxon>
        <taxon>Primates</taxon>
        <taxon>Haplorrhini</taxon>
        <taxon>Catarrhini</taxon>
        <taxon>Hominidae</taxon>
        <taxon>Homo</taxon>
    </lineage>
</organism>
<reference key="1">
    <citation type="journal article" date="2004" name="Nat. Genet.">
        <title>Complete sequencing and characterization of 21,243 full-length human cDNAs.</title>
        <authorList>
            <person name="Ota T."/>
            <person name="Suzuki Y."/>
            <person name="Nishikawa T."/>
            <person name="Otsuki T."/>
            <person name="Sugiyama T."/>
            <person name="Irie R."/>
            <person name="Wakamatsu A."/>
            <person name="Hayashi K."/>
            <person name="Sato H."/>
            <person name="Nagai K."/>
            <person name="Kimura K."/>
            <person name="Makita H."/>
            <person name="Sekine M."/>
            <person name="Obayashi M."/>
            <person name="Nishi T."/>
            <person name="Shibahara T."/>
            <person name="Tanaka T."/>
            <person name="Ishii S."/>
            <person name="Yamamoto J."/>
            <person name="Saito K."/>
            <person name="Kawai Y."/>
            <person name="Isono Y."/>
            <person name="Nakamura Y."/>
            <person name="Nagahari K."/>
            <person name="Murakami K."/>
            <person name="Yasuda T."/>
            <person name="Iwayanagi T."/>
            <person name="Wagatsuma M."/>
            <person name="Shiratori A."/>
            <person name="Sudo H."/>
            <person name="Hosoiri T."/>
            <person name="Kaku Y."/>
            <person name="Kodaira H."/>
            <person name="Kondo H."/>
            <person name="Sugawara M."/>
            <person name="Takahashi M."/>
            <person name="Kanda K."/>
            <person name="Yokoi T."/>
            <person name="Furuya T."/>
            <person name="Kikkawa E."/>
            <person name="Omura Y."/>
            <person name="Abe K."/>
            <person name="Kamihara K."/>
            <person name="Katsuta N."/>
            <person name="Sato K."/>
            <person name="Tanikawa M."/>
            <person name="Yamazaki M."/>
            <person name="Ninomiya K."/>
            <person name="Ishibashi T."/>
            <person name="Yamashita H."/>
            <person name="Murakawa K."/>
            <person name="Fujimori K."/>
            <person name="Tanai H."/>
            <person name="Kimata M."/>
            <person name="Watanabe M."/>
            <person name="Hiraoka S."/>
            <person name="Chiba Y."/>
            <person name="Ishida S."/>
            <person name="Ono Y."/>
            <person name="Takiguchi S."/>
            <person name="Watanabe S."/>
            <person name="Yosida M."/>
            <person name="Hotuta T."/>
            <person name="Kusano J."/>
            <person name="Kanehori K."/>
            <person name="Takahashi-Fujii A."/>
            <person name="Hara H."/>
            <person name="Tanase T.-O."/>
            <person name="Nomura Y."/>
            <person name="Togiya S."/>
            <person name="Komai F."/>
            <person name="Hara R."/>
            <person name="Takeuchi K."/>
            <person name="Arita M."/>
            <person name="Imose N."/>
            <person name="Musashino K."/>
            <person name="Yuuki H."/>
            <person name="Oshima A."/>
            <person name="Sasaki N."/>
            <person name="Aotsuka S."/>
            <person name="Yoshikawa Y."/>
            <person name="Matsunawa H."/>
            <person name="Ichihara T."/>
            <person name="Shiohata N."/>
            <person name="Sano S."/>
            <person name="Moriya S."/>
            <person name="Momiyama H."/>
            <person name="Satoh N."/>
            <person name="Takami S."/>
            <person name="Terashima Y."/>
            <person name="Suzuki O."/>
            <person name="Nakagawa S."/>
            <person name="Senoh A."/>
            <person name="Mizoguchi H."/>
            <person name="Goto Y."/>
            <person name="Shimizu F."/>
            <person name="Wakebe H."/>
            <person name="Hishigaki H."/>
            <person name="Watanabe T."/>
            <person name="Sugiyama A."/>
            <person name="Takemoto M."/>
            <person name="Kawakami B."/>
            <person name="Yamazaki M."/>
            <person name="Watanabe K."/>
            <person name="Kumagai A."/>
            <person name="Itakura S."/>
            <person name="Fukuzumi Y."/>
            <person name="Fujimori Y."/>
            <person name="Komiyama M."/>
            <person name="Tashiro H."/>
            <person name="Tanigami A."/>
            <person name="Fujiwara T."/>
            <person name="Ono T."/>
            <person name="Yamada K."/>
            <person name="Fujii Y."/>
            <person name="Ozaki K."/>
            <person name="Hirao M."/>
            <person name="Ohmori Y."/>
            <person name="Kawabata A."/>
            <person name="Hikiji T."/>
            <person name="Kobatake N."/>
            <person name="Inagaki H."/>
            <person name="Ikema Y."/>
            <person name="Okamoto S."/>
            <person name="Okitani R."/>
            <person name="Kawakami T."/>
            <person name="Noguchi S."/>
            <person name="Itoh T."/>
            <person name="Shigeta K."/>
            <person name="Senba T."/>
            <person name="Matsumura K."/>
            <person name="Nakajima Y."/>
            <person name="Mizuno T."/>
            <person name="Morinaga M."/>
            <person name="Sasaki M."/>
            <person name="Togashi T."/>
            <person name="Oyama M."/>
            <person name="Hata H."/>
            <person name="Watanabe M."/>
            <person name="Komatsu T."/>
            <person name="Mizushima-Sugano J."/>
            <person name="Satoh T."/>
            <person name="Shirai Y."/>
            <person name="Takahashi Y."/>
            <person name="Nakagawa K."/>
            <person name="Okumura K."/>
            <person name="Nagase T."/>
            <person name="Nomura N."/>
            <person name="Kikuchi H."/>
            <person name="Masuho Y."/>
            <person name="Yamashita R."/>
            <person name="Nakai K."/>
            <person name="Yada T."/>
            <person name="Nakamura Y."/>
            <person name="Ohara O."/>
            <person name="Isogai T."/>
            <person name="Sugano S."/>
        </authorList>
    </citation>
    <scope>NUCLEOTIDE SEQUENCE [LARGE SCALE MRNA]</scope>
    <source>
        <tissue>Hippocampus</tissue>
    </source>
</reference>
<dbReference type="EMBL" id="AK127288">
    <property type="protein sequence ID" value="BAC86917.1"/>
    <property type="molecule type" value="mRNA"/>
</dbReference>
<dbReference type="iPTMnet" id="Q6ZSN1"/>
<dbReference type="PhosphoSitePlus" id="Q6ZSN1"/>
<dbReference type="BioMuta" id="-"/>
<dbReference type="neXtProt" id="NX_Q6ZSN1"/>
<dbReference type="InParanoid" id="Q6ZSN1"/>
<dbReference type="PAN-GO" id="Q6ZSN1">
    <property type="GO annotations" value="0 GO annotations based on evolutionary models"/>
</dbReference>
<dbReference type="Pharos" id="Q6ZSN1">
    <property type="development level" value="Tdark"/>
</dbReference>
<dbReference type="Proteomes" id="UP000005640">
    <property type="component" value="Unplaced"/>
</dbReference>
<dbReference type="RNAct" id="Q6ZSN1">
    <property type="molecule type" value="protein"/>
</dbReference>
<dbReference type="InterPro" id="IPR029363">
    <property type="entry name" value="DUF4575"/>
</dbReference>
<dbReference type="Pfam" id="PF15143">
    <property type="entry name" value="DUF4575"/>
    <property type="match status" value="2"/>
</dbReference>
<sequence length="163" mass="16659">MGVPRAREGRGAGSQSPPRGRCLHPFRWGSQDRGRGEGLALSPLLPGVPPPPAMGVPRDRGGRGAGSQSTPRGGCLLPPRLGSQQPAGEEGLVLSPRLAGDASPCCDGSPKSQGVKRGWLSVPTSRGVPPPPAIGVLIARGGRGAGSQSLPRGWSFTPLRWGS</sequence>
<protein>
    <recommendedName>
        <fullName>Putative uncharacterized protein FLJ45355</fullName>
    </recommendedName>
</protein>
<evidence type="ECO:0000256" key="1">
    <source>
        <dbReference type="SAM" id="MobiDB-lite"/>
    </source>
</evidence>
<name>YI023_HUMAN</name>